<feature type="chain" id="PRO_1000060791" description="2-(5''-triphosphoribosyl)-3'-dephosphocoenzyme-A synthase">
    <location>
        <begin position="1"/>
        <end position="292"/>
    </location>
</feature>
<protein>
    <recommendedName>
        <fullName evidence="1">2-(5''-triphosphoribosyl)-3'-dephosphocoenzyme-A synthase</fullName>
        <shortName evidence="1">2-(5''-triphosphoribosyl)-3'-dephospho-CoA synthase</shortName>
        <ecNumber evidence="1">2.4.2.52</ecNumber>
    </recommendedName>
</protein>
<name>CITG_ECO24</name>
<proteinExistence type="inferred from homology"/>
<comment type="function">
    <text evidence="1">Catalyzes the formation of 2-(5''-triphosphoribosyl)-3'-dephosphocoenzyme-A, the precursor of the prosthetic group of the holo-acyl carrier protein (gamma chain) of citrate lyase, from ATP and dephospho-CoA.</text>
</comment>
<comment type="catalytic activity">
    <reaction evidence="1">
        <text>3'-dephospho-CoA + ATP = 2'-(5''-triphospho-alpha-D-ribosyl)-3'-dephospho-CoA + adenine</text>
        <dbReference type="Rhea" id="RHEA:15117"/>
        <dbReference type="ChEBI" id="CHEBI:16708"/>
        <dbReference type="ChEBI" id="CHEBI:30616"/>
        <dbReference type="ChEBI" id="CHEBI:57328"/>
        <dbReference type="ChEBI" id="CHEBI:61378"/>
        <dbReference type="EC" id="2.4.2.52"/>
    </reaction>
</comment>
<comment type="similarity">
    <text evidence="1">Belongs to the CitG/MdcB family.</text>
</comment>
<gene>
    <name evidence="1" type="primary">citG</name>
    <name type="ordered locus">EcE24377A_0635</name>
</gene>
<accession>A7ZIZ9</accession>
<sequence>MSMPATSTKTTKLATSLIDEYALLGWRAMLTEVNLSPKPGLVDRINCGAHKDMALEDFHRSALAIQGWLPRFIEFGACSAEMAPEAVLHGLRPIGMACEGDMFRATAGVNTHKGSIFSLGLLCAAIGRLLQLNQPVTPTTVCSTAASFCRGLTDRELRTNNSQLTAGQRLYQQLGLTGARGEAEAGYPLVLNHALPHYLTLLDQGLDPELALLDTLLLLMAINGDTNVASRGGEGGLRWLQREAQTLLQKGGIRTPADLDYLRQFDRECIERNLSPGGSADLLILTWFLAQI</sequence>
<reference key="1">
    <citation type="journal article" date="2008" name="J. Bacteriol.">
        <title>The pangenome structure of Escherichia coli: comparative genomic analysis of E. coli commensal and pathogenic isolates.</title>
        <authorList>
            <person name="Rasko D.A."/>
            <person name="Rosovitz M.J."/>
            <person name="Myers G.S.A."/>
            <person name="Mongodin E.F."/>
            <person name="Fricke W.F."/>
            <person name="Gajer P."/>
            <person name="Crabtree J."/>
            <person name="Sebaihia M."/>
            <person name="Thomson N.R."/>
            <person name="Chaudhuri R."/>
            <person name="Henderson I.R."/>
            <person name="Sperandio V."/>
            <person name="Ravel J."/>
        </authorList>
    </citation>
    <scope>NUCLEOTIDE SEQUENCE [LARGE SCALE GENOMIC DNA]</scope>
    <source>
        <strain>E24377A / ETEC</strain>
    </source>
</reference>
<keyword id="KW-0067">ATP-binding</keyword>
<keyword id="KW-0547">Nucleotide-binding</keyword>
<keyword id="KW-1185">Reference proteome</keyword>
<keyword id="KW-0808">Transferase</keyword>
<organism>
    <name type="scientific">Escherichia coli O139:H28 (strain E24377A / ETEC)</name>
    <dbReference type="NCBI Taxonomy" id="331111"/>
    <lineage>
        <taxon>Bacteria</taxon>
        <taxon>Pseudomonadati</taxon>
        <taxon>Pseudomonadota</taxon>
        <taxon>Gammaproteobacteria</taxon>
        <taxon>Enterobacterales</taxon>
        <taxon>Enterobacteriaceae</taxon>
        <taxon>Escherichia</taxon>
    </lineage>
</organism>
<dbReference type="EC" id="2.4.2.52" evidence="1"/>
<dbReference type="EMBL" id="CP000800">
    <property type="protein sequence ID" value="ABV18277.1"/>
    <property type="molecule type" value="Genomic_DNA"/>
</dbReference>
<dbReference type="RefSeq" id="WP_000062459.1">
    <property type="nucleotide sequence ID" value="NC_009801.1"/>
</dbReference>
<dbReference type="KEGG" id="ecw:EcE24377A_0635"/>
<dbReference type="HOGENOM" id="CLU_056179_1_0_6"/>
<dbReference type="Proteomes" id="UP000001122">
    <property type="component" value="Chromosome"/>
</dbReference>
<dbReference type="GO" id="GO:0005524">
    <property type="term" value="F:ATP binding"/>
    <property type="evidence" value="ECO:0007669"/>
    <property type="project" value="UniProtKB-KW"/>
</dbReference>
<dbReference type="GO" id="GO:0046917">
    <property type="term" value="F:triphosphoribosyl-dephospho-CoA synthase activity"/>
    <property type="evidence" value="ECO:0007669"/>
    <property type="project" value="UniProtKB-UniRule"/>
</dbReference>
<dbReference type="GO" id="GO:0051191">
    <property type="term" value="P:prosthetic group biosynthetic process"/>
    <property type="evidence" value="ECO:0007669"/>
    <property type="project" value="TreeGrafter"/>
</dbReference>
<dbReference type="FunFam" id="1.10.4200.10:FF:000001">
    <property type="entry name" value="Triphosphoribosyl-dephospho-CoA synthase CitG"/>
    <property type="match status" value="1"/>
</dbReference>
<dbReference type="Gene3D" id="1.10.4200.10">
    <property type="entry name" value="Triphosphoribosyl-dephospho-CoA protein"/>
    <property type="match status" value="1"/>
</dbReference>
<dbReference type="HAMAP" id="MF_00397">
    <property type="entry name" value="CitG"/>
    <property type="match status" value="1"/>
</dbReference>
<dbReference type="InterPro" id="IPR002736">
    <property type="entry name" value="CitG"/>
</dbReference>
<dbReference type="InterPro" id="IPR017551">
    <property type="entry name" value="TriPribosyl-deP-CoA_syn_CitG"/>
</dbReference>
<dbReference type="NCBIfam" id="TIGR03125">
    <property type="entry name" value="citrate_citG"/>
    <property type="match status" value="1"/>
</dbReference>
<dbReference type="NCBIfam" id="NF007503">
    <property type="entry name" value="PRK10096.1"/>
    <property type="match status" value="1"/>
</dbReference>
<dbReference type="PANTHER" id="PTHR30201:SF2">
    <property type="entry name" value="2-(5''-TRIPHOSPHORIBOSYL)-3'-DEPHOSPHOCOENZYME-A SYNTHASE"/>
    <property type="match status" value="1"/>
</dbReference>
<dbReference type="PANTHER" id="PTHR30201">
    <property type="entry name" value="TRIPHOSPHORIBOSYL-DEPHOSPHO-COA SYNTHASE"/>
    <property type="match status" value="1"/>
</dbReference>
<dbReference type="Pfam" id="PF01874">
    <property type="entry name" value="CitG"/>
    <property type="match status" value="1"/>
</dbReference>
<evidence type="ECO:0000255" key="1">
    <source>
        <dbReference type="HAMAP-Rule" id="MF_00397"/>
    </source>
</evidence>